<organismHost>
    <name type="scientific">Salmonella</name>
    <dbReference type="NCBI Taxonomy" id="590"/>
</organismHost>
<gene>
    <name evidence="2" type="primary">gene 58</name>
</gene>
<evidence type="ECO:0000255" key="1">
    <source>
        <dbReference type="HAMAP-Rule" id="MF_04133"/>
    </source>
</evidence>
<evidence type="ECO:0000303" key="2">
    <source>
    </source>
</evidence>
<evidence type="ECO:0000312" key="3">
    <source>
        <dbReference type="EMBL" id="AAQ14785.1"/>
    </source>
</evidence>
<evidence type="ECO:0000312" key="4">
    <source>
        <dbReference type="Proteomes" id="UP000009070"/>
    </source>
</evidence>
<organism evidence="4">
    <name type="scientific">Salmonella phage Felix O1 (isolate Felix O1-VT1)</name>
    <name type="common">Bacteriophage Felix O1</name>
    <dbReference type="NCBI Taxonomy" id="1283336"/>
    <lineage>
        <taxon>Viruses</taxon>
        <taxon>Duplodnaviria</taxon>
        <taxon>Heunggongvirae</taxon>
        <taxon>Uroviricota</taxon>
        <taxon>Caudoviricetes</taxon>
        <taxon>Ounavirinae</taxon>
        <taxon>Felixounavirus</taxon>
        <taxon>Felixounavirus felixO1</taxon>
    </lineage>
</organism>
<name>CAPSD_BPFO1</name>
<protein>
    <recommendedName>
        <fullName evidence="1">Major capsid protein</fullName>
    </recommendedName>
    <alternativeName>
        <fullName evidence="2">Gene product 58</fullName>
        <shortName evidence="2">gp58</shortName>
    </alternativeName>
    <alternativeName>
        <fullName evidence="1">Major head protein</fullName>
    </alternativeName>
</protein>
<reference key="1">
    <citation type="journal article" date="2010" name="Viruses">
        <title>Complete genomic sequence of bacteriophage felix o1.</title>
        <authorList>
            <person name="Whichard J.M."/>
            <person name="Weigt L.A."/>
            <person name="Borris D.J."/>
            <person name="Li L.L."/>
            <person name="Zhang Q."/>
            <person name="Kapur V."/>
            <person name="Pierson F.W."/>
            <person name="Lingohr E.J."/>
            <person name="She Y.M."/>
            <person name="Kropinski A.M."/>
            <person name="Sriranganathan N."/>
        </authorList>
    </citation>
    <scope>NUCLEOTIDE SEQUENCE [GENOMIC DNA]</scope>
    <source>
        <strain evidence="3">Isolate Felix O1-VT1</strain>
    </source>
</reference>
<proteinExistence type="inferred from homology"/>
<comment type="function">
    <text evidence="1">Assembles to form an icosahedral capsid. The assembly is primed by the interaction between capsid assembly protease and portal dodecamer, and major capsid proteins assemble cooperatively to form the procapsid with the help of capsid scaffolding protein. Major capsid protein forms hexons and pentons of the icosahedron. Viral genomic DNA is packaged into the procapsid through the portal vertex. The packaging triggers a dramatic reconfiguration of the capsid shell.</text>
</comment>
<comment type="subunit">
    <text evidence="1">Homomultimer.</text>
</comment>
<comment type="subcellular location">
    <subcellularLocation>
        <location evidence="1">Virion</location>
    </subcellularLocation>
    <subcellularLocation>
        <location evidence="1">Host cytoplasm</location>
    </subcellularLocation>
    <text evidence="1">Forms the capsid icosahedric shell.</text>
</comment>
<comment type="similarity">
    <text evidence="1">Belongs to the lambda phage major capsid protein family.</text>
</comment>
<sequence>MLTNSEKSRFFLADLTGEVQSIPNTYGYISNLGLFRSAPITQTTFLMDLTDWDVSLLDAVDRDSRKAETSAPERVRQISFPMMYFKEVESITPDEIQGVRQPGTANELTTEAVVRAKKLMKIRTKFDITREFLFMQALKGKVVDARGTLYADLYKQFDVEKKTIYFDLDNPNADIDASIEELRMHMEDEAKTGTVINGEEIHVVVDRVFFSKLTKHPKIRDAYLAQQTPLAWQQITGSLRTGGADGVQAHMNTFYYGGVKFVQYNGKFKDKRGKVHTLVSIDSVADTVGVGHAFPNVAMLGEANNIFEVAYGPCPKMGYANTLGQELYVFEYEKDRDEGIDFEAHSYMLPYCTRPQLLVDVRADAKGG</sequence>
<feature type="chain" id="PRO_0000432339" description="Major capsid protein">
    <location>
        <begin position="1"/>
        <end position="368"/>
    </location>
</feature>
<accession>Q6KGI8</accession>
<keyword id="KW-0167">Capsid protein</keyword>
<keyword id="KW-1035">Host cytoplasm</keyword>
<keyword id="KW-0426">Late protein</keyword>
<keyword id="KW-1185">Reference proteome</keyword>
<keyword id="KW-0946">Virion</keyword>
<dbReference type="EMBL" id="AF320576">
    <property type="protein sequence ID" value="AAQ14785.1"/>
    <property type="molecule type" value="Genomic_DNA"/>
</dbReference>
<dbReference type="RefSeq" id="NP_944891.1">
    <property type="nucleotide sequence ID" value="NC_005282.1"/>
</dbReference>
<dbReference type="SMR" id="Q6KGI8"/>
<dbReference type="KEGG" id="vg:2744044"/>
<dbReference type="Proteomes" id="UP000009070">
    <property type="component" value="Segment"/>
</dbReference>
<dbReference type="GO" id="GO:0030430">
    <property type="term" value="C:host cell cytoplasm"/>
    <property type="evidence" value="ECO:0007669"/>
    <property type="project" value="UniProtKB-SubCell"/>
</dbReference>
<dbReference type="GO" id="GO:0019028">
    <property type="term" value="C:viral capsid"/>
    <property type="evidence" value="ECO:0007669"/>
    <property type="project" value="UniProtKB-UniRule"/>
</dbReference>
<dbReference type="HAMAP" id="MF_04133">
    <property type="entry name" value="CAPSID_LAMBDA"/>
    <property type="match status" value="1"/>
</dbReference>
<dbReference type="InterPro" id="IPR005564">
    <property type="entry name" value="Major_capsid_GpE"/>
</dbReference>
<dbReference type="Pfam" id="PF03864">
    <property type="entry name" value="Phage_cap_E"/>
    <property type="match status" value="1"/>
</dbReference>